<sequence>MELEAKLHEIKKPIMVLGTSSGAGKSLTVTAICRILKNLGEEPIPFKGQNMSNNAWVDWEGGEMAYSQALQAFACGINPAAEMNPILLKPQGNSISEVIHLGKSIGTTTAKNYYKDWFTPGWEVIKKSLKSIYEGNPNCRLIIEGAGSPVEMNLIHRDLTNLRVAKYLNANCILVTDIERGGVFAQIIGTLELMKPEEKKLIKGIIINRFRGDLSLFEDGKKWIENKTQIPVVGIIPWLNDSFPPEDSLDLIEKKSLSKNPEIKVGIIKLPSISNFSDFDPLENEETIFIEWIRKSQNLSKYDFIILPGSKQTIKDQIFLENSGLSKDIRDYSKNKGNIVGICGGLQMLGTTLEDPYFKEGSKNYSEQKIKGIGLLPLKTTFFKKKLTRQIKSKSIWPCQSEINGFEIHNGQTVLDEIQSSLKINPIFEDSDLGWYKENNKGGTIAGTYIHGIFENDSWREHYINLIRKSKNLPTLNKKSISYKEKRQFIIDNLANEFHKHLNLKSFLS</sequence>
<gene>
    <name evidence="1" type="primary">cobQ</name>
    <name type="ordered locus">P9301_13521</name>
</gene>
<evidence type="ECO:0000255" key="1">
    <source>
        <dbReference type="HAMAP-Rule" id="MF_00028"/>
    </source>
</evidence>
<name>COBQ_PROM0</name>
<organism>
    <name type="scientific">Prochlorococcus marinus (strain MIT 9301)</name>
    <dbReference type="NCBI Taxonomy" id="167546"/>
    <lineage>
        <taxon>Bacteria</taxon>
        <taxon>Bacillati</taxon>
        <taxon>Cyanobacteriota</taxon>
        <taxon>Cyanophyceae</taxon>
        <taxon>Synechococcales</taxon>
        <taxon>Prochlorococcaceae</taxon>
        <taxon>Prochlorococcus</taxon>
    </lineage>
</organism>
<dbReference type="EMBL" id="CP000576">
    <property type="protein sequence ID" value="ABO17975.1"/>
    <property type="molecule type" value="Genomic_DNA"/>
</dbReference>
<dbReference type="RefSeq" id="WP_011863286.1">
    <property type="nucleotide sequence ID" value="NC_009091.1"/>
</dbReference>
<dbReference type="SMR" id="A3PE00"/>
<dbReference type="STRING" id="167546.P9301_13521"/>
<dbReference type="KEGG" id="pmg:P9301_13521"/>
<dbReference type="eggNOG" id="COG1492">
    <property type="taxonomic scope" value="Bacteria"/>
</dbReference>
<dbReference type="HOGENOM" id="CLU_019250_2_2_3"/>
<dbReference type="OrthoDB" id="9808302at2"/>
<dbReference type="UniPathway" id="UPA00148"/>
<dbReference type="Proteomes" id="UP000001430">
    <property type="component" value="Chromosome"/>
</dbReference>
<dbReference type="GO" id="GO:0015420">
    <property type="term" value="F:ABC-type vitamin B12 transporter activity"/>
    <property type="evidence" value="ECO:0007669"/>
    <property type="project" value="UniProtKB-UniRule"/>
</dbReference>
<dbReference type="GO" id="GO:0003824">
    <property type="term" value="F:catalytic activity"/>
    <property type="evidence" value="ECO:0007669"/>
    <property type="project" value="InterPro"/>
</dbReference>
<dbReference type="GO" id="GO:0009236">
    <property type="term" value="P:cobalamin biosynthetic process"/>
    <property type="evidence" value="ECO:0007669"/>
    <property type="project" value="UniProtKB-UniRule"/>
</dbReference>
<dbReference type="CDD" id="cd05389">
    <property type="entry name" value="CobQ_N"/>
    <property type="match status" value="1"/>
</dbReference>
<dbReference type="CDD" id="cd01750">
    <property type="entry name" value="GATase1_CobQ"/>
    <property type="match status" value="1"/>
</dbReference>
<dbReference type="Gene3D" id="3.40.50.880">
    <property type="match status" value="1"/>
</dbReference>
<dbReference type="Gene3D" id="3.40.50.300">
    <property type="entry name" value="P-loop containing nucleotide triphosphate hydrolases"/>
    <property type="match status" value="1"/>
</dbReference>
<dbReference type="HAMAP" id="MF_00028">
    <property type="entry name" value="CobQ"/>
    <property type="match status" value="1"/>
</dbReference>
<dbReference type="InterPro" id="IPR029062">
    <property type="entry name" value="Class_I_gatase-like"/>
</dbReference>
<dbReference type="InterPro" id="IPR002586">
    <property type="entry name" value="CobQ/CobB/MinD/ParA_Nub-bd_dom"/>
</dbReference>
<dbReference type="InterPro" id="IPR033949">
    <property type="entry name" value="CobQ_GATase1"/>
</dbReference>
<dbReference type="InterPro" id="IPR047045">
    <property type="entry name" value="CobQ_N"/>
</dbReference>
<dbReference type="InterPro" id="IPR004459">
    <property type="entry name" value="CobQ_synth"/>
</dbReference>
<dbReference type="InterPro" id="IPR011698">
    <property type="entry name" value="GATase_3"/>
</dbReference>
<dbReference type="InterPro" id="IPR027417">
    <property type="entry name" value="P-loop_NTPase"/>
</dbReference>
<dbReference type="NCBIfam" id="TIGR00313">
    <property type="entry name" value="cobQ"/>
    <property type="match status" value="1"/>
</dbReference>
<dbReference type="NCBIfam" id="NF001989">
    <property type="entry name" value="PRK00784.1"/>
    <property type="match status" value="1"/>
</dbReference>
<dbReference type="PANTHER" id="PTHR21343:SF1">
    <property type="entry name" value="COBYRIC ACID SYNTHASE"/>
    <property type="match status" value="1"/>
</dbReference>
<dbReference type="PANTHER" id="PTHR21343">
    <property type="entry name" value="DETHIOBIOTIN SYNTHETASE"/>
    <property type="match status" value="1"/>
</dbReference>
<dbReference type="Pfam" id="PF01656">
    <property type="entry name" value="CbiA"/>
    <property type="match status" value="1"/>
</dbReference>
<dbReference type="Pfam" id="PF07685">
    <property type="entry name" value="GATase_3"/>
    <property type="match status" value="1"/>
</dbReference>
<dbReference type="SUPFAM" id="SSF52317">
    <property type="entry name" value="Class I glutamine amidotransferase-like"/>
    <property type="match status" value="1"/>
</dbReference>
<dbReference type="SUPFAM" id="SSF52540">
    <property type="entry name" value="P-loop containing nucleoside triphosphate hydrolases"/>
    <property type="match status" value="1"/>
</dbReference>
<dbReference type="PROSITE" id="PS51274">
    <property type="entry name" value="GATASE_COBBQ"/>
    <property type="match status" value="1"/>
</dbReference>
<feature type="chain" id="PRO_1000002370" description="Cobyric acid synthase">
    <location>
        <begin position="1"/>
        <end position="509"/>
    </location>
</feature>
<feature type="domain" description="GATase cobBQ-type" evidence="1">
    <location>
        <begin position="262"/>
        <end position="459"/>
    </location>
</feature>
<feature type="active site" description="Nucleophile" evidence="1">
    <location>
        <position position="343"/>
    </location>
</feature>
<feature type="active site" evidence="1">
    <location>
        <position position="451"/>
    </location>
</feature>
<reference key="1">
    <citation type="journal article" date="2007" name="PLoS Genet.">
        <title>Patterns and implications of gene gain and loss in the evolution of Prochlorococcus.</title>
        <authorList>
            <person name="Kettler G.C."/>
            <person name="Martiny A.C."/>
            <person name="Huang K."/>
            <person name="Zucker J."/>
            <person name="Coleman M.L."/>
            <person name="Rodrigue S."/>
            <person name="Chen F."/>
            <person name="Lapidus A."/>
            <person name="Ferriera S."/>
            <person name="Johnson J."/>
            <person name="Steglich C."/>
            <person name="Church G.M."/>
            <person name="Richardson P."/>
            <person name="Chisholm S.W."/>
        </authorList>
    </citation>
    <scope>NUCLEOTIDE SEQUENCE [LARGE SCALE GENOMIC DNA]</scope>
    <source>
        <strain>MIT 9301</strain>
    </source>
</reference>
<protein>
    <recommendedName>
        <fullName evidence="1">Cobyric acid synthase</fullName>
    </recommendedName>
</protein>
<comment type="function">
    <text evidence="1">Catalyzes amidations at positions B, D, E, and G on adenosylcobyrinic A,C-diamide. NH(2) groups are provided by glutamine, and one molecule of ATP is hydrogenolyzed for each amidation.</text>
</comment>
<comment type="pathway">
    <text evidence="1">Cofactor biosynthesis; adenosylcobalamin biosynthesis.</text>
</comment>
<comment type="similarity">
    <text evidence="1">Belongs to the CobB/CobQ family. CobQ subfamily.</text>
</comment>
<accession>A3PE00</accession>
<proteinExistence type="inferred from homology"/>
<keyword id="KW-0169">Cobalamin biosynthesis</keyword>
<keyword id="KW-0315">Glutamine amidotransferase</keyword>
<keyword id="KW-1185">Reference proteome</keyword>